<keyword id="KW-0052">Apoplast</keyword>
<keyword id="KW-1015">Disulfide bond</keyword>
<keyword id="KW-0325">Glycoprotein</keyword>
<keyword id="KW-0964">Secreted</keyword>
<keyword id="KW-0732">Signal</keyword>
<organism>
    <name type="scientific">Sinopodophyllum hexandrum</name>
    <name type="common">Himalayan may apple</name>
    <name type="synonym">Podophyllum hexandrum</name>
    <dbReference type="NCBI Taxonomy" id="93608"/>
    <lineage>
        <taxon>Eukaryota</taxon>
        <taxon>Viridiplantae</taxon>
        <taxon>Streptophyta</taxon>
        <taxon>Embryophyta</taxon>
        <taxon>Tracheophyta</taxon>
        <taxon>Spermatophyta</taxon>
        <taxon>Magnoliopsida</taxon>
        <taxon>Ranunculales</taxon>
        <taxon>Berberidaceae</taxon>
        <taxon>Podophylloideae</taxon>
        <taxon>Podophylleae</taxon>
        <taxon>Sinopodophyllum</taxon>
    </lineage>
</organism>
<sequence length="193" mass="21521">MGGEKAFSFIFLLFLCFFLANLSASSAHPPRQKLKQRIPCKQLVLYFHDVVYNGHNKANATASIVGAPQGADLVKLAGENHFGNVVVFDDPITLDNNFHSPPVGRAQGLYVYDKKDTFHSWLSFSFTLNTTMHQGTLIFMGADPILIKNRDITVVGGTGDFFMARGIATIATDSYEGEVYFRLKVDIKLYECW</sequence>
<comment type="function">
    <text evidence="1 5">Dirigent proteins impart stereoselectivity on the phenoxy radical-coupling reaction, yielding optically active lignans from two molecules of coniferyl alcohol in the biosynthesis of lignans, flavonolignans, and alkaloids and thus plays a central role in plant secondary metabolism (By similarity). Also involved in the biosynthesis of etoposide, a chemotherapeutic compound of the topoisomerase inhibitor family (PubMed:26359402).</text>
</comment>
<comment type="pathway">
    <text evidence="5">Aromatic compound metabolism; phenylpropanoid biosynthesis.</text>
</comment>
<comment type="subunit">
    <text evidence="1">Homodimer.</text>
</comment>
<comment type="subcellular location">
    <subcellularLocation>
        <location evidence="1">Secreted</location>
        <location evidence="1">Extracellular space</location>
        <location evidence="1">Apoplast</location>
    </subcellularLocation>
</comment>
<comment type="tissue specificity">
    <text evidence="4 5">Expressed in rhizomes, stems, and leaves.</text>
</comment>
<comment type="induction">
    <text evidence="4 5">Transiently induced after wounding and by jasmonic acid (MeJA) (PubMed:23653238, PubMed:26359402). After an exposition to UV-light, first transiently induced before fading out (PubMed:23653238).</text>
</comment>
<comment type="biotechnology">
    <text evidence="10">Combinatorially expression of Sinopodophyllum hexandrum (mayapple) genes of the podophyllotoxin pathway (e.g. DIR, PLR, SDH, CYP719A23, OMT3, CYP71CU1, OMT1, 2-ODD, CYP71BE54 and CYP82D61) in Nicotiana benthamiana (tobacco) results in the production of the chemotherapeutic compound etoposide.</text>
</comment>
<comment type="similarity">
    <text evidence="9">Belongs to the plant dirigent protein family.</text>
</comment>
<name>DIR_SINHE</name>
<feature type="signal peptide" evidence="2">
    <location>
        <begin position="1"/>
        <end position="29"/>
    </location>
</feature>
<feature type="chain" id="PRO_5008193436" description="Dirigent protein">
    <location>
        <begin position="30"/>
        <end position="193"/>
    </location>
</feature>
<feature type="glycosylation site" description="N-linked (GlcNAc...) asparagine" evidence="3">
    <location>
        <position position="59"/>
    </location>
</feature>
<feature type="glycosylation site" description="N-linked (GlcNAc...) asparagine" evidence="3">
    <location>
        <position position="129"/>
    </location>
</feature>
<feature type="disulfide bond" evidence="1">
    <location>
        <begin position="40"/>
        <end position="192"/>
    </location>
</feature>
<reference key="1">
    <citation type="submission" date="2006-02" db="EMBL/GenBank/DDBJ databases">
        <title>A dirigent protein oxidase gene from Tibet Podophyllum.</title>
        <authorList>
            <person name="Lan X."/>
        </authorList>
    </citation>
    <scope>NUCLEOTIDE SEQUENCE [MRNA]</scope>
</reference>
<reference key="2">
    <citation type="journal article" date="2013" name="Protoplasma">
        <title>Expressed sequence tags and molecular cloning and characterization of gene encoding pinoresinol/lariciresinol reductase from Podophyllum hexandrum.</title>
        <authorList>
            <person name="Wankhede D.P."/>
            <person name="Biswas D.K."/>
            <person name="Rajkumar S."/>
            <person name="Sinha A.K."/>
        </authorList>
    </citation>
    <scope>TISSUE SPECIFICITY</scope>
    <scope>INDUCTION BY WOUNDING; UV-LIGHT AND JASMONIC ACID</scope>
</reference>
<reference key="3">
    <citation type="journal article" date="2015" name="Science">
        <title>Six enzymes from mayapple that complete the biosynthetic pathway to the etoposide aglycone.</title>
        <authorList>
            <person name="Lau W."/>
            <person name="Sattely E.S."/>
        </authorList>
    </citation>
    <scope>FUNCTION</scope>
    <scope>BIOTECHNOLOGY</scope>
    <scope>INDUCTION BY WOUNDING</scope>
    <scope>TISSUE SPECIFICITY</scope>
    <scope>PATHWAY</scope>
</reference>
<evidence type="ECO:0000250" key="1">
    <source>
        <dbReference type="UniProtKB" id="Q9SUQ8"/>
    </source>
</evidence>
<evidence type="ECO:0000255" key="2"/>
<evidence type="ECO:0000255" key="3">
    <source>
        <dbReference type="PROSITE-ProRule" id="PRU00498"/>
    </source>
</evidence>
<evidence type="ECO:0000269" key="4">
    <source>
    </source>
</evidence>
<evidence type="ECO:0000269" key="5">
    <source>
    </source>
</evidence>
<evidence type="ECO:0000303" key="6">
    <source>
    </source>
</evidence>
<evidence type="ECO:0000303" key="7">
    <source>
    </source>
</evidence>
<evidence type="ECO:0000303" key="8">
    <source ref="1"/>
</evidence>
<evidence type="ECO:0000305" key="9"/>
<evidence type="ECO:0000305" key="10">
    <source>
    </source>
</evidence>
<protein>
    <recommendedName>
        <fullName evidence="8">Dirigent protein</fullName>
        <shortName evidence="6">PhDPO</shortName>
    </recommendedName>
</protein>
<dbReference type="EMBL" id="DQ414685">
    <property type="protein sequence ID" value="ABD66756.1"/>
    <property type="molecule type" value="mRNA"/>
</dbReference>
<dbReference type="SMR" id="Q1ZZU9"/>
<dbReference type="GlyCosmos" id="Q1ZZU9">
    <property type="glycosylation" value="2 sites, No reported glycans"/>
</dbReference>
<dbReference type="UniPathway" id="UPA00711"/>
<dbReference type="GO" id="GO:0048046">
    <property type="term" value="C:apoplast"/>
    <property type="evidence" value="ECO:0007669"/>
    <property type="project" value="UniProtKB-SubCell"/>
</dbReference>
<dbReference type="GO" id="GO:0102910">
    <property type="term" value="F:dirigent protein activity"/>
    <property type="evidence" value="ECO:0000314"/>
    <property type="project" value="UniProtKB"/>
</dbReference>
<dbReference type="GO" id="GO:0009699">
    <property type="term" value="P:phenylpropanoid biosynthetic process"/>
    <property type="evidence" value="ECO:0000314"/>
    <property type="project" value="UniProtKB"/>
</dbReference>
<dbReference type="GO" id="GO:0009753">
    <property type="term" value="P:response to jasmonic acid"/>
    <property type="evidence" value="ECO:0000270"/>
    <property type="project" value="UniProtKB"/>
</dbReference>
<dbReference type="GO" id="GO:0009411">
    <property type="term" value="P:response to UV"/>
    <property type="evidence" value="ECO:0000270"/>
    <property type="project" value="UniProtKB"/>
</dbReference>
<dbReference type="GO" id="GO:0009611">
    <property type="term" value="P:response to wounding"/>
    <property type="evidence" value="ECO:0000270"/>
    <property type="project" value="UniProtKB"/>
</dbReference>
<dbReference type="Gene3D" id="2.40.480.10">
    <property type="entry name" value="Allene oxide cyclase-like"/>
    <property type="match status" value="1"/>
</dbReference>
<dbReference type="InterPro" id="IPR044859">
    <property type="entry name" value="Allene_oxi_cyc_Dirigent"/>
</dbReference>
<dbReference type="InterPro" id="IPR004265">
    <property type="entry name" value="Dirigent"/>
</dbReference>
<dbReference type="PANTHER" id="PTHR46442">
    <property type="entry name" value="DIRIGENT PROTEIN"/>
    <property type="match status" value="1"/>
</dbReference>
<dbReference type="PANTHER" id="PTHR46442:SF4">
    <property type="entry name" value="DIRIGENT PROTEIN"/>
    <property type="match status" value="1"/>
</dbReference>
<dbReference type="Pfam" id="PF03018">
    <property type="entry name" value="Dirigent"/>
    <property type="match status" value="1"/>
</dbReference>
<proteinExistence type="evidence at transcript level"/>
<accession>Q1ZZU9</accession>
<gene>
    <name evidence="7" type="primary">DIR</name>
    <name evidence="6 8" type="synonym">DPO</name>
    <name evidence="7" type="synonym">Phex2312</name>
</gene>